<reference key="1">
    <citation type="journal article" date="2005" name="Nature">
        <title>The map-based sequence of the rice genome.</title>
        <authorList>
            <consortium name="International rice genome sequencing project (IRGSP)"/>
        </authorList>
    </citation>
    <scope>NUCLEOTIDE SEQUENCE [LARGE SCALE GENOMIC DNA]</scope>
    <source>
        <strain>cv. Nipponbare</strain>
    </source>
</reference>
<reference key="2">
    <citation type="journal article" date="2008" name="Nucleic Acids Res.">
        <title>The rice annotation project database (RAP-DB): 2008 update.</title>
        <authorList>
            <consortium name="The rice annotation project (RAP)"/>
        </authorList>
    </citation>
    <scope>GENOME REANNOTATION</scope>
    <source>
        <strain>cv. Nipponbare</strain>
    </source>
</reference>
<reference key="3">
    <citation type="journal article" date="2013" name="Rice">
        <title>Improvement of the Oryza sativa Nipponbare reference genome using next generation sequence and optical map data.</title>
        <authorList>
            <person name="Kawahara Y."/>
            <person name="de la Bastide M."/>
            <person name="Hamilton J.P."/>
            <person name="Kanamori H."/>
            <person name="McCombie W.R."/>
            <person name="Ouyang S."/>
            <person name="Schwartz D.C."/>
            <person name="Tanaka T."/>
            <person name="Wu J."/>
            <person name="Zhou S."/>
            <person name="Childs K.L."/>
            <person name="Davidson R.M."/>
            <person name="Lin H."/>
            <person name="Quesada-Ocampo L."/>
            <person name="Vaillancourt B."/>
            <person name="Sakai H."/>
            <person name="Lee S.S."/>
            <person name="Kim J."/>
            <person name="Numa H."/>
            <person name="Itoh T."/>
            <person name="Buell C.R."/>
            <person name="Matsumoto T."/>
        </authorList>
    </citation>
    <scope>GENOME REANNOTATION</scope>
    <source>
        <strain>cv. Nipponbare</strain>
    </source>
</reference>
<dbReference type="EMBL" id="AP005296">
    <property type="protein sequence ID" value="BAC20873.1"/>
    <property type="status" value="ALT_SEQ"/>
    <property type="molecule type" value="Genomic_DNA"/>
</dbReference>
<dbReference type="EMBL" id="AP008213">
    <property type="protein sequence ID" value="BAF21909.2"/>
    <property type="status" value="ALT_SEQ"/>
    <property type="molecule type" value="Genomic_DNA"/>
</dbReference>
<dbReference type="EMBL" id="AP014963">
    <property type="protein sequence ID" value="BAT02153.1"/>
    <property type="molecule type" value="Genomic_DNA"/>
</dbReference>
<dbReference type="RefSeq" id="XP_015647112.1">
    <property type="nucleotide sequence ID" value="XM_015791626.1"/>
</dbReference>
<dbReference type="SMR" id="Q0D5G4"/>
<dbReference type="FunCoup" id="Q0D5G4">
    <property type="interactions" value="26"/>
</dbReference>
<dbReference type="STRING" id="39947.Q0D5G4"/>
<dbReference type="PaxDb" id="39947-Q0D5G4"/>
<dbReference type="EnsemblPlants" id="Os07t0563300-01">
    <property type="protein sequence ID" value="Os07t0563300-01"/>
    <property type="gene ID" value="Os07g0563300"/>
</dbReference>
<dbReference type="Gramene" id="Os07t0563300-01">
    <property type="protein sequence ID" value="Os07t0563300-01"/>
    <property type="gene ID" value="Os07g0563300"/>
</dbReference>
<dbReference type="KEGG" id="dosa:Os07g0563300"/>
<dbReference type="eggNOG" id="ENOG502QPW7">
    <property type="taxonomic scope" value="Eukaryota"/>
</dbReference>
<dbReference type="HOGENOM" id="CLU_593965_0_0_1"/>
<dbReference type="InParanoid" id="Q0D5G4"/>
<dbReference type="OrthoDB" id="757982at2759"/>
<dbReference type="Proteomes" id="UP000000763">
    <property type="component" value="Chromosome 7"/>
</dbReference>
<dbReference type="Proteomes" id="UP000059680">
    <property type="component" value="Chromosome 7"/>
</dbReference>
<dbReference type="GO" id="GO:0005634">
    <property type="term" value="C:nucleus"/>
    <property type="evidence" value="ECO:0007669"/>
    <property type="project" value="UniProtKB-SubCell"/>
</dbReference>
<dbReference type="GO" id="GO:0003677">
    <property type="term" value="F:DNA binding"/>
    <property type="evidence" value="ECO:0007669"/>
    <property type="project" value="UniProtKB-KW"/>
</dbReference>
<dbReference type="GO" id="GO:0008270">
    <property type="term" value="F:zinc ion binding"/>
    <property type="evidence" value="ECO:0007669"/>
    <property type="project" value="UniProtKB-KW"/>
</dbReference>
<dbReference type="CDD" id="cd10017">
    <property type="entry name" value="B3_DNA"/>
    <property type="match status" value="1"/>
</dbReference>
<dbReference type="FunFam" id="2.40.330.10:FF:000006">
    <property type="entry name" value="B3 domain-containing transcription repressor VAL1"/>
    <property type="match status" value="1"/>
</dbReference>
<dbReference type="Gene3D" id="3.30.40.100">
    <property type="match status" value="1"/>
</dbReference>
<dbReference type="Gene3D" id="2.40.330.10">
    <property type="entry name" value="DNA-binding pseudobarrel domain"/>
    <property type="match status" value="1"/>
</dbReference>
<dbReference type="InterPro" id="IPR003340">
    <property type="entry name" value="B3_DNA-bd"/>
</dbReference>
<dbReference type="InterPro" id="IPR015300">
    <property type="entry name" value="DNA-bd_pseudobarrel_sf"/>
</dbReference>
<dbReference type="InterPro" id="IPR013087">
    <property type="entry name" value="Znf_C2H2_type"/>
</dbReference>
<dbReference type="InterPro" id="IPR011124">
    <property type="entry name" value="Znf_CW"/>
</dbReference>
<dbReference type="PANTHER" id="PTHR46245">
    <property type="entry name" value="B3 DOMAIN-CONTAINING PROTEIN OS07G0563300"/>
    <property type="match status" value="1"/>
</dbReference>
<dbReference type="PANTHER" id="PTHR46245:SF10">
    <property type="entry name" value="B3 DOMAIN-CONTAINING TRANSCRIPTION FACTOR VAL3"/>
    <property type="match status" value="1"/>
</dbReference>
<dbReference type="Pfam" id="PF02362">
    <property type="entry name" value="B3"/>
    <property type="match status" value="1"/>
</dbReference>
<dbReference type="Pfam" id="PF07496">
    <property type="entry name" value="zf-CW"/>
    <property type="match status" value="1"/>
</dbReference>
<dbReference type="SMART" id="SM01019">
    <property type="entry name" value="B3"/>
    <property type="match status" value="1"/>
</dbReference>
<dbReference type="SUPFAM" id="SSF101936">
    <property type="entry name" value="DNA-binding pseudobarrel domain"/>
    <property type="match status" value="1"/>
</dbReference>
<dbReference type="PROSITE" id="PS50863">
    <property type="entry name" value="B3"/>
    <property type="match status" value="1"/>
</dbReference>
<dbReference type="PROSITE" id="PS51050">
    <property type="entry name" value="ZF_CW"/>
    <property type="match status" value="1"/>
</dbReference>
<organism>
    <name type="scientific">Oryza sativa subsp. japonica</name>
    <name type="common">Rice</name>
    <dbReference type="NCBI Taxonomy" id="39947"/>
    <lineage>
        <taxon>Eukaryota</taxon>
        <taxon>Viridiplantae</taxon>
        <taxon>Streptophyta</taxon>
        <taxon>Embryophyta</taxon>
        <taxon>Tracheophyta</taxon>
        <taxon>Spermatophyta</taxon>
        <taxon>Magnoliopsida</taxon>
        <taxon>Liliopsida</taxon>
        <taxon>Poales</taxon>
        <taxon>Poaceae</taxon>
        <taxon>BOP clade</taxon>
        <taxon>Oryzoideae</taxon>
        <taxon>Oryzeae</taxon>
        <taxon>Oryzinae</taxon>
        <taxon>Oryza</taxon>
        <taxon>Oryza sativa</taxon>
    </lineage>
</organism>
<sequence>MSSPAQPPPTRPPVAAPPPSLAAAAPISVQPPPLQPKPPPHPQQPPQAVVSVGVGPPPPTPQHQQQQQGPPGHAPPQQRPRICFNAHCKDPKSDGPRRRGWRLRNGDFAELCDRCYHSFEHGGFCETFHLEVAGWRNCESCGKRLHCGCIVSVHAFVHLDAGGVECVMCARKSHAAMAPSQIWSSSMHMAQNVADRKDNFVKSWRPPAGQFSSQWRQNNMWSMSTMQSDLQQRLAFEFDRPSGSEKLLPGRTFIHAHEKKFDDMHDRSTTPAGMNQIMRERYANGHTQHTTLDPTYAYTLYHREGTNPNLHDHSHHAGENDHLTARKGVTSDPCSSVSTTFKLDSHHPSILKDDPSAVPAGLSSNFSSANGPKDHIRIGPTQQQQQMASSSLQKQFYSHSVIDNDFQAQLRNGRPRMDAKARSQLLPRYWPRITDQELQHLSGDSNSVITPLFEKMLSASDAGRIGRLVLPKKCAEAYFPAISQAEGLPLKVQDATGKEWVFQFRFWPNNNSRMYVLEGVTPCIQSMQLQAGDTVTFSRIDPEGKLVMGFRKATNLSAEQDQPTKPANGVLPPPEANNKVVVPDSSPNAAVPRPIKVNTESKSSSPVEQATACKIDKGALPQKEGPGTSSSSPLPVKRKATSVGPKIKRFHMDSEESMELKITWEEAQELLRPPPKAPSIVVVDGHEFEEYEEPPILGRRTYFVTDQSGENHQWAQCEDCSKWRKLPVDALLPSKWTCSDNKWDSERSSCDSAQEINMEELGEMIPIKPGAAKKTKGKVDTDNIDVSDGLDTLANLAILGEGESLPSQPTTRHPRHRPGCSCIVCIQPPSGKGPKHKQTCTCNVCMTVRRRFRTLMMRREKRQQSEKDSGVPRKREPGQSSEPVPQSGSGAHPTSTSSPHQRADTNGEGPEDMSIDNKRTSSPVKNQIDLNSQPEREDEQSPKSDATRLLRDNPT</sequence>
<gene>
    <name type="ordered locus">Os07g0563300</name>
    <name type="ordered locus">LOC_Os07g37610</name>
    <name type="ORF">OJ1720_F04.105</name>
</gene>
<feature type="chain" id="PRO_0000376975" description="B3 domain-containing protein Os07g0563300">
    <location>
        <begin position="1"/>
        <end position="955"/>
    </location>
</feature>
<feature type="DNA-binding region" description="TF-B3" evidence="1">
    <location>
        <begin position="453"/>
        <end position="554"/>
    </location>
</feature>
<feature type="zinc finger region" description="CW-type" evidence="2">
    <location>
        <begin position="708"/>
        <end position="758"/>
    </location>
</feature>
<feature type="region of interest" description="Disordered" evidence="3">
    <location>
        <begin position="1"/>
        <end position="81"/>
    </location>
</feature>
<feature type="region of interest" description="Disordered" evidence="3">
    <location>
        <begin position="325"/>
        <end position="392"/>
    </location>
</feature>
<feature type="region of interest" description="Disordered" evidence="3">
    <location>
        <begin position="556"/>
        <end position="642"/>
    </location>
</feature>
<feature type="region of interest" description="Disordered" evidence="3">
    <location>
        <begin position="856"/>
        <end position="955"/>
    </location>
</feature>
<feature type="compositionally biased region" description="Pro residues" evidence="3">
    <location>
        <begin position="1"/>
        <end position="20"/>
    </location>
</feature>
<feature type="compositionally biased region" description="Pro residues" evidence="3">
    <location>
        <begin position="29"/>
        <end position="45"/>
    </location>
</feature>
<feature type="compositionally biased region" description="Low complexity" evidence="3">
    <location>
        <begin position="62"/>
        <end position="71"/>
    </location>
</feature>
<feature type="compositionally biased region" description="Polar residues" evidence="3">
    <location>
        <begin position="332"/>
        <end position="342"/>
    </location>
</feature>
<feature type="compositionally biased region" description="Basic and acidic residues" evidence="3">
    <location>
        <begin position="343"/>
        <end position="355"/>
    </location>
</feature>
<feature type="compositionally biased region" description="Low complexity" evidence="3">
    <location>
        <begin position="382"/>
        <end position="392"/>
    </location>
</feature>
<feature type="compositionally biased region" description="Polar residues" evidence="3">
    <location>
        <begin position="556"/>
        <end position="565"/>
    </location>
</feature>
<feature type="compositionally biased region" description="Polar residues" evidence="3">
    <location>
        <begin position="598"/>
        <end position="608"/>
    </location>
</feature>
<feature type="compositionally biased region" description="Basic and acidic residues" evidence="3">
    <location>
        <begin position="862"/>
        <end position="877"/>
    </location>
</feature>
<feature type="compositionally biased region" description="Polar residues" evidence="3">
    <location>
        <begin position="878"/>
        <end position="900"/>
    </location>
</feature>
<feature type="compositionally biased region" description="Polar residues" evidence="3">
    <location>
        <begin position="920"/>
        <end position="933"/>
    </location>
</feature>
<feature type="compositionally biased region" description="Basic and acidic residues" evidence="3">
    <location>
        <begin position="939"/>
        <end position="955"/>
    </location>
</feature>
<feature type="binding site" evidence="2">
    <location>
        <position position="717"/>
    </location>
    <ligand>
        <name>Zn(2+)</name>
        <dbReference type="ChEBI" id="CHEBI:29105"/>
    </ligand>
</feature>
<feature type="binding site" evidence="2">
    <location>
        <position position="720"/>
    </location>
    <ligand>
        <name>Zn(2+)</name>
        <dbReference type="ChEBI" id="CHEBI:29105"/>
    </ligand>
</feature>
<feature type="binding site" evidence="2">
    <location>
        <position position="738"/>
    </location>
    <ligand>
        <name>Zn(2+)</name>
        <dbReference type="ChEBI" id="CHEBI:29105"/>
    </ligand>
</feature>
<feature type="binding site" evidence="2">
    <location>
        <position position="750"/>
    </location>
    <ligand>
        <name>Zn(2+)</name>
        <dbReference type="ChEBI" id="CHEBI:29105"/>
    </ligand>
</feature>
<accession>Q0D5G4</accession>
<accession>A0A0P0X7R8</accession>
<accession>Q8H349</accession>
<protein>
    <recommendedName>
        <fullName>B3 domain-containing protein Os07g0563300</fullName>
    </recommendedName>
</protein>
<keyword id="KW-0238">DNA-binding</keyword>
<keyword id="KW-0479">Metal-binding</keyword>
<keyword id="KW-0539">Nucleus</keyword>
<keyword id="KW-1185">Reference proteome</keyword>
<keyword id="KW-0804">Transcription</keyword>
<keyword id="KW-0805">Transcription regulation</keyword>
<keyword id="KW-0862">Zinc</keyword>
<keyword id="KW-0863">Zinc-finger</keyword>
<name>Y7633_ORYSJ</name>
<evidence type="ECO:0000255" key="1">
    <source>
        <dbReference type="PROSITE-ProRule" id="PRU00326"/>
    </source>
</evidence>
<evidence type="ECO:0000255" key="2">
    <source>
        <dbReference type="PROSITE-ProRule" id="PRU00454"/>
    </source>
</evidence>
<evidence type="ECO:0000256" key="3">
    <source>
        <dbReference type="SAM" id="MobiDB-lite"/>
    </source>
</evidence>
<evidence type="ECO:0000305" key="4"/>
<proteinExistence type="inferred from homology"/>
<comment type="subcellular location">
    <subcellularLocation>
        <location evidence="1">Nucleus</location>
    </subcellularLocation>
</comment>
<comment type="sequence caution" evidence="4">
    <conflict type="erroneous gene model prediction">
        <sequence resource="EMBL-CDS" id="BAC20873"/>
    </conflict>
</comment>
<comment type="sequence caution" evidence="4">
    <conflict type="erroneous gene model prediction">
        <sequence resource="EMBL-CDS" id="BAF21909"/>
    </conflict>
</comment>